<feature type="chain" id="PRO_1000022414" description="Phenylalanine--tRNA ligase beta subunit">
    <location>
        <begin position="1"/>
        <end position="567"/>
    </location>
</feature>
<feature type="domain" description="B5" evidence="1">
    <location>
        <begin position="287"/>
        <end position="362"/>
    </location>
</feature>
<feature type="binding site" evidence="1">
    <location>
        <position position="340"/>
    </location>
    <ligand>
        <name>Mg(2+)</name>
        <dbReference type="ChEBI" id="CHEBI:18420"/>
        <note>shared with alpha subunit</note>
    </ligand>
</feature>
<feature type="binding site" evidence="1">
    <location>
        <position position="346"/>
    </location>
    <ligand>
        <name>Mg(2+)</name>
        <dbReference type="ChEBI" id="CHEBI:18420"/>
        <note>shared with alpha subunit</note>
    </ligand>
</feature>
<feature type="binding site" evidence="1">
    <location>
        <position position="349"/>
    </location>
    <ligand>
        <name>Mg(2+)</name>
        <dbReference type="ChEBI" id="CHEBI:18420"/>
        <note>shared with alpha subunit</note>
    </ligand>
</feature>
<feature type="binding site" evidence="1">
    <location>
        <position position="350"/>
    </location>
    <ligand>
        <name>Mg(2+)</name>
        <dbReference type="ChEBI" id="CHEBI:18420"/>
        <note>shared with alpha subunit</note>
    </ligand>
</feature>
<protein>
    <recommendedName>
        <fullName evidence="1">Phenylalanine--tRNA ligase beta subunit</fullName>
        <ecNumber evidence="1">6.1.1.20</ecNumber>
    </recommendedName>
    <alternativeName>
        <fullName evidence="1">Phenylalanyl-tRNA synthetase beta subunit</fullName>
        <shortName evidence="1">PheRS</shortName>
    </alternativeName>
</protein>
<evidence type="ECO:0000255" key="1">
    <source>
        <dbReference type="HAMAP-Rule" id="MF_00284"/>
    </source>
</evidence>
<dbReference type="EC" id="6.1.1.20" evidence="1"/>
<dbReference type="EMBL" id="CP000395">
    <property type="protein sequence ID" value="ABH01784.1"/>
    <property type="molecule type" value="Genomic_DNA"/>
</dbReference>
<dbReference type="EMBL" id="CP002933">
    <property type="protein sequence ID" value="AEL69737.1"/>
    <property type="molecule type" value="Genomic_DNA"/>
</dbReference>
<dbReference type="RefSeq" id="WP_011601062.1">
    <property type="nucleotide sequence ID" value="NC_008277.1"/>
</dbReference>
<dbReference type="SMR" id="Q0SMZ4"/>
<dbReference type="STRING" id="29518.BLA32_01695"/>
<dbReference type="KEGG" id="baf:BAPKO_0541"/>
<dbReference type="KEGG" id="bafz:BafPKo_0529"/>
<dbReference type="PATRIC" id="fig|390236.22.peg.510"/>
<dbReference type="eggNOG" id="COG0072">
    <property type="taxonomic scope" value="Bacteria"/>
</dbReference>
<dbReference type="HOGENOM" id="CLU_020279_3_0_12"/>
<dbReference type="OrthoDB" id="9805455at2"/>
<dbReference type="Proteomes" id="UP000005216">
    <property type="component" value="Chromosome"/>
</dbReference>
<dbReference type="GO" id="GO:0009328">
    <property type="term" value="C:phenylalanine-tRNA ligase complex"/>
    <property type="evidence" value="ECO:0007669"/>
    <property type="project" value="TreeGrafter"/>
</dbReference>
<dbReference type="GO" id="GO:0005524">
    <property type="term" value="F:ATP binding"/>
    <property type="evidence" value="ECO:0007669"/>
    <property type="project" value="UniProtKB-UniRule"/>
</dbReference>
<dbReference type="GO" id="GO:0000287">
    <property type="term" value="F:magnesium ion binding"/>
    <property type="evidence" value="ECO:0007669"/>
    <property type="project" value="InterPro"/>
</dbReference>
<dbReference type="GO" id="GO:0004826">
    <property type="term" value="F:phenylalanine-tRNA ligase activity"/>
    <property type="evidence" value="ECO:0007669"/>
    <property type="project" value="UniProtKB-UniRule"/>
</dbReference>
<dbReference type="GO" id="GO:0003723">
    <property type="term" value="F:RNA binding"/>
    <property type="evidence" value="ECO:0007669"/>
    <property type="project" value="InterPro"/>
</dbReference>
<dbReference type="GO" id="GO:0006432">
    <property type="term" value="P:phenylalanyl-tRNA aminoacylation"/>
    <property type="evidence" value="ECO:0007669"/>
    <property type="project" value="UniProtKB-UniRule"/>
</dbReference>
<dbReference type="CDD" id="cd00769">
    <property type="entry name" value="PheRS_beta_core"/>
    <property type="match status" value="1"/>
</dbReference>
<dbReference type="Gene3D" id="3.30.56.10">
    <property type="match status" value="2"/>
</dbReference>
<dbReference type="Gene3D" id="3.30.930.10">
    <property type="entry name" value="Bira Bifunctional Protein, Domain 2"/>
    <property type="match status" value="1"/>
</dbReference>
<dbReference type="Gene3D" id="3.50.40.10">
    <property type="entry name" value="Phenylalanyl-trna Synthetase, Chain B, domain 3"/>
    <property type="match status" value="1"/>
</dbReference>
<dbReference type="HAMAP" id="MF_00284">
    <property type="entry name" value="Phe_tRNA_synth_beta2"/>
    <property type="match status" value="1"/>
</dbReference>
<dbReference type="InterPro" id="IPR045864">
    <property type="entry name" value="aa-tRNA-synth_II/BPL/LPL"/>
</dbReference>
<dbReference type="InterPro" id="IPR005146">
    <property type="entry name" value="B3/B4_tRNA-bd"/>
</dbReference>
<dbReference type="InterPro" id="IPR009061">
    <property type="entry name" value="DNA-bd_dom_put_sf"/>
</dbReference>
<dbReference type="InterPro" id="IPR045060">
    <property type="entry name" value="Phe-tRNA-ligase_IIc_bsu"/>
</dbReference>
<dbReference type="InterPro" id="IPR004531">
    <property type="entry name" value="Phe-tRNA-synth_IIc_bsu_arc_euk"/>
</dbReference>
<dbReference type="InterPro" id="IPR020825">
    <property type="entry name" value="Phe-tRNA_synthase-like_B3/B4"/>
</dbReference>
<dbReference type="InterPro" id="IPR022918">
    <property type="entry name" value="Phe_tRNA_ligase_beta2_arc"/>
</dbReference>
<dbReference type="InterPro" id="IPR041616">
    <property type="entry name" value="PheRS_beta_core"/>
</dbReference>
<dbReference type="InterPro" id="IPR040659">
    <property type="entry name" value="PhetRS_B1"/>
</dbReference>
<dbReference type="InterPro" id="IPR005147">
    <property type="entry name" value="tRNA_synthase_B5-dom"/>
</dbReference>
<dbReference type="NCBIfam" id="TIGR00471">
    <property type="entry name" value="pheT_arch"/>
    <property type="match status" value="1"/>
</dbReference>
<dbReference type="PANTHER" id="PTHR10947:SF0">
    <property type="entry name" value="PHENYLALANINE--TRNA LIGASE BETA SUBUNIT"/>
    <property type="match status" value="1"/>
</dbReference>
<dbReference type="PANTHER" id="PTHR10947">
    <property type="entry name" value="PHENYLALANYL-TRNA SYNTHETASE BETA CHAIN AND LEUCINE-RICH REPEAT-CONTAINING PROTEIN 47"/>
    <property type="match status" value="1"/>
</dbReference>
<dbReference type="Pfam" id="PF03484">
    <property type="entry name" value="B5"/>
    <property type="match status" value="1"/>
</dbReference>
<dbReference type="Pfam" id="PF18262">
    <property type="entry name" value="PhetRS_B1"/>
    <property type="match status" value="1"/>
</dbReference>
<dbReference type="Pfam" id="PF17759">
    <property type="entry name" value="tRNA_synthFbeta"/>
    <property type="match status" value="1"/>
</dbReference>
<dbReference type="SMART" id="SM00873">
    <property type="entry name" value="B3_4"/>
    <property type="match status" value="1"/>
</dbReference>
<dbReference type="SMART" id="SM00874">
    <property type="entry name" value="B5"/>
    <property type="match status" value="1"/>
</dbReference>
<dbReference type="SUPFAM" id="SSF55681">
    <property type="entry name" value="Class II aaRS and biotin synthetases"/>
    <property type="match status" value="1"/>
</dbReference>
<dbReference type="SUPFAM" id="SSF46955">
    <property type="entry name" value="Putative DNA-binding domain"/>
    <property type="match status" value="2"/>
</dbReference>
<dbReference type="PROSITE" id="PS51483">
    <property type="entry name" value="B5"/>
    <property type="match status" value="1"/>
</dbReference>
<gene>
    <name evidence="1" type="primary">pheT</name>
    <name type="ordered locus">BAPKO_0541</name>
    <name type="ordered locus">BafPKo_0529</name>
</gene>
<name>SYFB_BORAP</name>
<accession>Q0SMZ4</accession>
<accession>G0IQ67</accession>
<sequence>MPKVEIYKNLFLDKVGKNFTNSEISELLEPFKAEFDGFDENSGKIKIEFNDTNRPDLWSYTGLARQIKTYFFGKIPCYDFFSKKGDFKKCYGEILVDNKMSQIRPFIFGFLAKGLIINDRMLEALIQFQEKLCQSYGQKRKRVAMGMYNSNFIKFPISYVASSPNHKFVPLGMDCELSLLEINEKHPKGLEYSHIIKNFDKYPLLLDDNNNVVSYPPIINSNNIGSLKVGDTDIFVEVTGIDFEATLLALSVVACDFYDMGFEILPVKTVFKKPFGLDFEELVCPYYFQEEVEFNVKNVNRLLGSNLTLERICLSLKKMGVNSYSRDLKNYVIPPFYRNDFLHEVDVIEDVMIGEGLASFHPELPKAFAVGRLSALEEFSRDIRNLMVGMGFQEMIYNYMGSKKDFIDRMNISDQNFLKVSNPMTENYEYIRASIIPNLLKSESVSSNFPYPHKIFEVGKIALKNLNTTIEGTNTFTNLAFLMSGKEISFNEINSIVATLFYYLNIEINLKESQANFYINGRGADIFLKDFNIGSFGEISPYVLNNFGIFIPCSVFEVNINKLMSRS</sequence>
<proteinExistence type="inferred from homology"/>
<comment type="catalytic activity">
    <reaction evidence="1">
        <text>tRNA(Phe) + L-phenylalanine + ATP = L-phenylalanyl-tRNA(Phe) + AMP + diphosphate + H(+)</text>
        <dbReference type="Rhea" id="RHEA:19413"/>
        <dbReference type="Rhea" id="RHEA-COMP:9668"/>
        <dbReference type="Rhea" id="RHEA-COMP:9699"/>
        <dbReference type="ChEBI" id="CHEBI:15378"/>
        <dbReference type="ChEBI" id="CHEBI:30616"/>
        <dbReference type="ChEBI" id="CHEBI:33019"/>
        <dbReference type="ChEBI" id="CHEBI:58095"/>
        <dbReference type="ChEBI" id="CHEBI:78442"/>
        <dbReference type="ChEBI" id="CHEBI:78531"/>
        <dbReference type="ChEBI" id="CHEBI:456215"/>
        <dbReference type="EC" id="6.1.1.20"/>
    </reaction>
</comment>
<comment type="cofactor">
    <cofactor evidence="1">
        <name>Mg(2+)</name>
        <dbReference type="ChEBI" id="CHEBI:18420"/>
    </cofactor>
</comment>
<comment type="subunit">
    <text evidence="1">Tetramer of two alpha and two beta subunits.</text>
</comment>
<comment type="subcellular location">
    <subcellularLocation>
        <location evidence="1">Cytoplasm</location>
    </subcellularLocation>
</comment>
<comment type="similarity">
    <text evidence="1">Belongs to the phenylalanyl-tRNA synthetase beta subunit family. Type 2 subfamily.</text>
</comment>
<reference key="1">
    <citation type="journal article" date="2006" name="BMC Genomics">
        <title>Comparative genome analysis: selection pressure on the Borrelia vls cassettes is essential for infectivity.</title>
        <authorList>
            <person name="Gloeckner G."/>
            <person name="Schulte-Spechtel U."/>
            <person name="Schilhabel M."/>
            <person name="Felder M."/>
            <person name="Suehnel J."/>
            <person name="Wilske B."/>
            <person name="Platzer M."/>
        </authorList>
    </citation>
    <scope>NUCLEOTIDE SEQUENCE [LARGE SCALE GENOMIC DNA]</scope>
    <source>
        <strain>PKo</strain>
    </source>
</reference>
<reference key="2">
    <citation type="journal article" date="2011" name="J. Bacteriol.">
        <title>Whole-genome sequences of two Borrelia afzelii and two Borrelia garinii Lyme disease agent isolates.</title>
        <authorList>
            <person name="Casjens S.R."/>
            <person name="Mongodin E.F."/>
            <person name="Qiu W.G."/>
            <person name="Dunn J.J."/>
            <person name="Luft B.J."/>
            <person name="Fraser-Liggett C.M."/>
            <person name="Schutzer S.E."/>
        </authorList>
    </citation>
    <scope>NUCLEOTIDE SEQUENCE [LARGE SCALE GENOMIC DNA]</scope>
    <source>
        <strain>PKo</strain>
    </source>
</reference>
<organism>
    <name type="scientific">Borreliella afzelii (strain PKo)</name>
    <name type="common">Borrelia afzelii</name>
    <dbReference type="NCBI Taxonomy" id="390236"/>
    <lineage>
        <taxon>Bacteria</taxon>
        <taxon>Pseudomonadati</taxon>
        <taxon>Spirochaetota</taxon>
        <taxon>Spirochaetia</taxon>
        <taxon>Spirochaetales</taxon>
        <taxon>Borreliaceae</taxon>
        <taxon>Borreliella</taxon>
    </lineage>
</organism>
<keyword id="KW-0030">Aminoacyl-tRNA synthetase</keyword>
<keyword id="KW-0067">ATP-binding</keyword>
<keyword id="KW-0963">Cytoplasm</keyword>
<keyword id="KW-0436">Ligase</keyword>
<keyword id="KW-0460">Magnesium</keyword>
<keyword id="KW-0479">Metal-binding</keyword>
<keyword id="KW-0547">Nucleotide-binding</keyword>
<keyword id="KW-0648">Protein biosynthesis</keyword>